<name>HEM1_CLOB8</name>
<accession>A6LSY3</accession>
<proteinExistence type="inferred from homology"/>
<sequence>MIGLIGIRKNTPLEIREKFIVKSKKYNEYFGELLKELNEVVILATCNRTEIYFNASLNEEELLKKIFDIFNWDYEYKKYVFITNNKDAYRHLFEVCSGFHSKILGEDQILGQVKDAYEEALEFKAVSLELHRLFQEAITCGKRFRKEAKLFEIPVSSSSIVVSEAIKRECTKFMVLGYGEVGQLVMKYLLSHKIQTVYLVVRNPKIKDEIQDERVKVITFEEKNKYINSIECIISCTSAPHPVVKTEDISESGSRLVIYDLSVPRDVEKEVALLSRTEVYNIDTISRIDDENKKLRKDKMEDNRHIMNKYLKEYDEWLKLRSISHVIKNLKTVGNDVYEKRVQTFSHKSKDKNDIALAHKLIKSTSDFYINRAIEVIKEETLKGCGEEWIGIIEKIFMTKE</sequence>
<feature type="chain" id="PRO_1000075404" description="Glutamyl-tRNA reductase">
    <location>
        <begin position="1"/>
        <end position="401"/>
    </location>
</feature>
<feature type="active site" description="Nucleophile" evidence="1">
    <location>
        <position position="46"/>
    </location>
</feature>
<feature type="binding site" evidence="1">
    <location>
        <begin position="45"/>
        <end position="48"/>
    </location>
    <ligand>
        <name>substrate</name>
    </ligand>
</feature>
<feature type="binding site" evidence="1">
    <location>
        <position position="101"/>
    </location>
    <ligand>
        <name>substrate</name>
    </ligand>
</feature>
<feature type="binding site" evidence="1">
    <location>
        <begin position="106"/>
        <end position="108"/>
    </location>
    <ligand>
        <name>substrate</name>
    </ligand>
</feature>
<feature type="binding site" evidence="1">
    <location>
        <position position="112"/>
    </location>
    <ligand>
        <name>substrate</name>
    </ligand>
</feature>
<feature type="binding site" evidence="1">
    <location>
        <begin position="177"/>
        <end position="182"/>
    </location>
    <ligand>
        <name>NADP(+)</name>
        <dbReference type="ChEBI" id="CHEBI:58349"/>
    </ligand>
</feature>
<feature type="site" description="Important for activity" evidence="1">
    <location>
        <position position="91"/>
    </location>
</feature>
<dbReference type="EC" id="1.2.1.70" evidence="1"/>
<dbReference type="EMBL" id="CP000721">
    <property type="protein sequence ID" value="ABR33463.1"/>
    <property type="molecule type" value="Genomic_DNA"/>
</dbReference>
<dbReference type="RefSeq" id="WP_011968617.1">
    <property type="nucleotide sequence ID" value="NC_009617.1"/>
</dbReference>
<dbReference type="SMR" id="A6LSY3"/>
<dbReference type="KEGG" id="cbe:Cbei_1283"/>
<dbReference type="eggNOG" id="COG0373">
    <property type="taxonomic scope" value="Bacteria"/>
</dbReference>
<dbReference type="HOGENOM" id="CLU_035113_1_0_9"/>
<dbReference type="UniPathway" id="UPA00251">
    <property type="reaction ID" value="UER00316"/>
</dbReference>
<dbReference type="Proteomes" id="UP000000565">
    <property type="component" value="Chromosome"/>
</dbReference>
<dbReference type="GO" id="GO:0008883">
    <property type="term" value="F:glutamyl-tRNA reductase activity"/>
    <property type="evidence" value="ECO:0007669"/>
    <property type="project" value="UniProtKB-UniRule"/>
</dbReference>
<dbReference type="GO" id="GO:0050661">
    <property type="term" value="F:NADP binding"/>
    <property type="evidence" value="ECO:0007669"/>
    <property type="project" value="InterPro"/>
</dbReference>
<dbReference type="GO" id="GO:0019353">
    <property type="term" value="P:protoporphyrinogen IX biosynthetic process from glutamate"/>
    <property type="evidence" value="ECO:0007669"/>
    <property type="project" value="TreeGrafter"/>
</dbReference>
<dbReference type="FunFam" id="3.30.460.30:FF:000001">
    <property type="entry name" value="Glutamyl-tRNA reductase"/>
    <property type="match status" value="1"/>
</dbReference>
<dbReference type="Gene3D" id="3.30.460.30">
    <property type="entry name" value="Glutamyl-tRNA reductase, N-terminal domain"/>
    <property type="match status" value="1"/>
</dbReference>
<dbReference type="Gene3D" id="3.40.50.720">
    <property type="entry name" value="NAD(P)-binding Rossmann-like Domain"/>
    <property type="match status" value="1"/>
</dbReference>
<dbReference type="HAMAP" id="MF_00087">
    <property type="entry name" value="Glu_tRNA_reductase"/>
    <property type="match status" value="1"/>
</dbReference>
<dbReference type="InterPro" id="IPR000343">
    <property type="entry name" value="4pyrrol_synth_GluRdtase"/>
</dbReference>
<dbReference type="InterPro" id="IPR015896">
    <property type="entry name" value="4pyrrol_synth_GluRdtase_dimer"/>
</dbReference>
<dbReference type="InterPro" id="IPR015895">
    <property type="entry name" value="4pyrrol_synth_GluRdtase_N"/>
</dbReference>
<dbReference type="InterPro" id="IPR018214">
    <property type="entry name" value="GluRdtase_CS"/>
</dbReference>
<dbReference type="InterPro" id="IPR036343">
    <property type="entry name" value="GluRdtase_N_sf"/>
</dbReference>
<dbReference type="InterPro" id="IPR036291">
    <property type="entry name" value="NAD(P)-bd_dom_sf"/>
</dbReference>
<dbReference type="InterPro" id="IPR006151">
    <property type="entry name" value="Shikm_DH/Glu-tRNA_Rdtase"/>
</dbReference>
<dbReference type="NCBIfam" id="TIGR01035">
    <property type="entry name" value="hemA"/>
    <property type="match status" value="1"/>
</dbReference>
<dbReference type="PANTHER" id="PTHR43013">
    <property type="entry name" value="GLUTAMYL-TRNA REDUCTASE"/>
    <property type="match status" value="1"/>
</dbReference>
<dbReference type="PANTHER" id="PTHR43013:SF1">
    <property type="entry name" value="GLUTAMYL-TRNA REDUCTASE"/>
    <property type="match status" value="1"/>
</dbReference>
<dbReference type="Pfam" id="PF00745">
    <property type="entry name" value="GlutR_dimer"/>
    <property type="match status" value="1"/>
</dbReference>
<dbReference type="Pfam" id="PF05201">
    <property type="entry name" value="GlutR_N"/>
    <property type="match status" value="1"/>
</dbReference>
<dbReference type="Pfam" id="PF01488">
    <property type="entry name" value="Shikimate_DH"/>
    <property type="match status" value="1"/>
</dbReference>
<dbReference type="PIRSF" id="PIRSF000445">
    <property type="entry name" value="4pyrrol_synth_GluRdtase"/>
    <property type="match status" value="1"/>
</dbReference>
<dbReference type="SUPFAM" id="SSF69742">
    <property type="entry name" value="Glutamyl tRNA-reductase catalytic, N-terminal domain"/>
    <property type="match status" value="1"/>
</dbReference>
<dbReference type="SUPFAM" id="SSF51735">
    <property type="entry name" value="NAD(P)-binding Rossmann-fold domains"/>
    <property type="match status" value="1"/>
</dbReference>
<dbReference type="PROSITE" id="PS00747">
    <property type="entry name" value="GLUTR"/>
    <property type="match status" value="1"/>
</dbReference>
<evidence type="ECO:0000255" key="1">
    <source>
        <dbReference type="HAMAP-Rule" id="MF_00087"/>
    </source>
</evidence>
<organism>
    <name type="scientific">Clostridium beijerinckii (strain ATCC 51743 / NCIMB 8052)</name>
    <name type="common">Clostridium acetobutylicum</name>
    <dbReference type="NCBI Taxonomy" id="290402"/>
    <lineage>
        <taxon>Bacteria</taxon>
        <taxon>Bacillati</taxon>
        <taxon>Bacillota</taxon>
        <taxon>Clostridia</taxon>
        <taxon>Eubacteriales</taxon>
        <taxon>Clostridiaceae</taxon>
        <taxon>Clostridium</taxon>
    </lineage>
</organism>
<gene>
    <name evidence="1" type="primary">hemA</name>
    <name type="ordered locus">Cbei_1283</name>
</gene>
<protein>
    <recommendedName>
        <fullName evidence="1">Glutamyl-tRNA reductase</fullName>
        <shortName evidence="1">GluTR</shortName>
        <ecNumber evidence="1">1.2.1.70</ecNumber>
    </recommendedName>
</protein>
<keyword id="KW-0521">NADP</keyword>
<keyword id="KW-0560">Oxidoreductase</keyword>
<keyword id="KW-0627">Porphyrin biosynthesis</keyword>
<reference key="1">
    <citation type="submission" date="2007-06" db="EMBL/GenBank/DDBJ databases">
        <title>Complete sequence of Clostridium beijerinckii NCIMB 8052.</title>
        <authorList>
            <consortium name="US DOE Joint Genome Institute"/>
            <person name="Copeland A."/>
            <person name="Lucas S."/>
            <person name="Lapidus A."/>
            <person name="Barry K."/>
            <person name="Detter J.C."/>
            <person name="Glavina del Rio T."/>
            <person name="Hammon N."/>
            <person name="Israni S."/>
            <person name="Dalin E."/>
            <person name="Tice H."/>
            <person name="Pitluck S."/>
            <person name="Sims D."/>
            <person name="Brettin T."/>
            <person name="Bruce D."/>
            <person name="Tapia R."/>
            <person name="Brainard J."/>
            <person name="Schmutz J."/>
            <person name="Larimer F."/>
            <person name="Land M."/>
            <person name="Hauser L."/>
            <person name="Kyrpides N."/>
            <person name="Mikhailova N."/>
            <person name="Bennet G."/>
            <person name="Cann I."/>
            <person name="Chen J.-S."/>
            <person name="Contreras A.L."/>
            <person name="Jones D."/>
            <person name="Kashket E."/>
            <person name="Mitchell W."/>
            <person name="Stoddard S."/>
            <person name="Schwarz W."/>
            <person name="Qureshi N."/>
            <person name="Young M."/>
            <person name="Shi Z."/>
            <person name="Ezeji T."/>
            <person name="White B."/>
            <person name="Blaschek H."/>
            <person name="Richardson P."/>
        </authorList>
    </citation>
    <scope>NUCLEOTIDE SEQUENCE [LARGE SCALE GENOMIC DNA]</scope>
    <source>
        <strain>ATCC 51743 / NCIMB 8052</strain>
    </source>
</reference>
<comment type="function">
    <text evidence="1">Catalyzes the NADPH-dependent reduction of glutamyl-tRNA(Glu) to glutamate 1-semialdehyde (GSA).</text>
</comment>
<comment type="catalytic activity">
    <reaction evidence="1">
        <text>(S)-4-amino-5-oxopentanoate + tRNA(Glu) + NADP(+) = L-glutamyl-tRNA(Glu) + NADPH + H(+)</text>
        <dbReference type="Rhea" id="RHEA:12344"/>
        <dbReference type="Rhea" id="RHEA-COMP:9663"/>
        <dbReference type="Rhea" id="RHEA-COMP:9680"/>
        <dbReference type="ChEBI" id="CHEBI:15378"/>
        <dbReference type="ChEBI" id="CHEBI:57501"/>
        <dbReference type="ChEBI" id="CHEBI:57783"/>
        <dbReference type="ChEBI" id="CHEBI:58349"/>
        <dbReference type="ChEBI" id="CHEBI:78442"/>
        <dbReference type="ChEBI" id="CHEBI:78520"/>
        <dbReference type="EC" id="1.2.1.70"/>
    </reaction>
</comment>
<comment type="pathway">
    <text evidence="1">Porphyrin-containing compound metabolism; protoporphyrin-IX biosynthesis; 5-aminolevulinate from L-glutamyl-tRNA(Glu): step 1/2.</text>
</comment>
<comment type="subunit">
    <text evidence="1">Homodimer.</text>
</comment>
<comment type="domain">
    <text evidence="1">Possesses an unusual extended V-shaped dimeric structure with each monomer consisting of three distinct domains arranged along a curved 'spinal' alpha-helix. The N-terminal catalytic domain specifically recognizes the glutamate moiety of the substrate. The second domain is the NADPH-binding domain, and the third C-terminal domain is responsible for dimerization.</text>
</comment>
<comment type="miscellaneous">
    <text evidence="1">During catalysis, the active site Cys acts as a nucleophile attacking the alpha-carbonyl group of tRNA-bound glutamate with the formation of a thioester intermediate between enzyme and glutamate, and the concomitant release of tRNA(Glu). The thioester intermediate is finally reduced by direct hydride transfer from NADPH, to form the product GSA.</text>
</comment>
<comment type="similarity">
    <text evidence="1">Belongs to the glutamyl-tRNA reductase family.</text>
</comment>